<comment type="function">
    <text evidence="1">Catalyzes the first step in hexosamine metabolism, converting fructose-6P into glucosamine-6P using glutamine as a nitrogen source.</text>
</comment>
<comment type="catalytic activity">
    <reaction evidence="1">
        <text>D-fructose 6-phosphate + L-glutamine = D-glucosamine 6-phosphate + L-glutamate</text>
        <dbReference type="Rhea" id="RHEA:13237"/>
        <dbReference type="ChEBI" id="CHEBI:29985"/>
        <dbReference type="ChEBI" id="CHEBI:58359"/>
        <dbReference type="ChEBI" id="CHEBI:58725"/>
        <dbReference type="ChEBI" id="CHEBI:61527"/>
        <dbReference type="EC" id="2.6.1.16"/>
    </reaction>
</comment>
<comment type="subunit">
    <text evidence="1">Homodimer.</text>
</comment>
<comment type="subcellular location">
    <subcellularLocation>
        <location evidence="1">Cytoplasm</location>
    </subcellularLocation>
</comment>
<organism>
    <name type="scientific">Streptococcus pyogenes serotype M6 (strain ATCC BAA-946 / MGAS10394)</name>
    <dbReference type="NCBI Taxonomy" id="286636"/>
    <lineage>
        <taxon>Bacteria</taxon>
        <taxon>Bacillati</taxon>
        <taxon>Bacillota</taxon>
        <taxon>Bacilli</taxon>
        <taxon>Lactobacillales</taxon>
        <taxon>Streptococcaceae</taxon>
        <taxon>Streptococcus</taxon>
    </lineage>
</organism>
<protein>
    <recommendedName>
        <fullName evidence="1">Glutamine--fructose-6-phosphate aminotransferase [isomerizing]</fullName>
        <ecNumber evidence="1">2.6.1.16</ecNumber>
    </recommendedName>
    <alternativeName>
        <fullName evidence="1">D-fructose-6-phosphate amidotransferase</fullName>
    </alternativeName>
    <alternativeName>
        <fullName evidence="1">GFAT</fullName>
    </alternativeName>
    <alternativeName>
        <fullName evidence="1">Glucosamine-6-phosphate synthase</fullName>
    </alternativeName>
    <alternativeName>
        <fullName evidence="1">Hexosephosphate aminotransferase</fullName>
    </alternativeName>
    <alternativeName>
        <fullName evidence="1">L-glutamine--D-fructose-6-phosphate amidotransferase</fullName>
    </alternativeName>
</protein>
<feature type="initiator methionine" description="Removed" evidence="1">
    <location>
        <position position="1"/>
    </location>
</feature>
<feature type="chain" id="PRO_0000135395" description="Glutamine--fructose-6-phosphate aminotransferase [isomerizing]">
    <location>
        <begin position="2"/>
        <end position="604"/>
    </location>
</feature>
<feature type="domain" description="Glutamine amidotransferase type-2" evidence="1">
    <location>
        <begin position="2"/>
        <end position="218"/>
    </location>
</feature>
<feature type="domain" description="SIS 1" evidence="1">
    <location>
        <begin position="284"/>
        <end position="423"/>
    </location>
</feature>
<feature type="domain" description="SIS 2" evidence="1">
    <location>
        <begin position="456"/>
        <end position="594"/>
    </location>
</feature>
<feature type="active site" description="Nucleophile; for GATase activity" evidence="1">
    <location>
        <position position="2"/>
    </location>
</feature>
<feature type="active site" description="For Fru-6P isomerization activity" evidence="1">
    <location>
        <position position="599"/>
    </location>
</feature>
<accession>Q5XBV6</accession>
<reference key="1">
    <citation type="journal article" date="2004" name="J. Infect. Dis.">
        <title>Progress toward characterization of the group A Streptococcus metagenome: complete genome sequence of a macrolide-resistant serotype M6 strain.</title>
        <authorList>
            <person name="Banks D.J."/>
            <person name="Porcella S.F."/>
            <person name="Barbian K.D."/>
            <person name="Beres S.B."/>
            <person name="Philips L.E."/>
            <person name="Voyich J.M."/>
            <person name="DeLeo F.R."/>
            <person name="Martin J.M."/>
            <person name="Somerville G.A."/>
            <person name="Musser J.M."/>
        </authorList>
    </citation>
    <scope>NUCLEOTIDE SEQUENCE [LARGE SCALE GENOMIC DNA]</scope>
    <source>
        <strain>ATCC BAA-946 / MGAS10394</strain>
    </source>
</reference>
<dbReference type="EC" id="2.6.1.16" evidence="1"/>
<dbReference type="EMBL" id="CP000003">
    <property type="protein sequence ID" value="AAT87107.1"/>
    <property type="molecule type" value="Genomic_DNA"/>
</dbReference>
<dbReference type="RefSeq" id="WP_011184570.1">
    <property type="nucleotide sequence ID" value="NC_006086.1"/>
</dbReference>
<dbReference type="SMR" id="Q5XBV6"/>
<dbReference type="MEROPS" id="C44.A08"/>
<dbReference type="KEGG" id="spa:M6_Spy0972"/>
<dbReference type="HOGENOM" id="CLU_012520_7_1_9"/>
<dbReference type="Proteomes" id="UP000001167">
    <property type="component" value="Chromosome"/>
</dbReference>
<dbReference type="GO" id="GO:0005829">
    <property type="term" value="C:cytosol"/>
    <property type="evidence" value="ECO:0007669"/>
    <property type="project" value="TreeGrafter"/>
</dbReference>
<dbReference type="GO" id="GO:0097367">
    <property type="term" value="F:carbohydrate derivative binding"/>
    <property type="evidence" value="ECO:0007669"/>
    <property type="project" value="InterPro"/>
</dbReference>
<dbReference type="GO" id="GO:0004360">
    <property type="term" value="F:glutamine-fructose-6-phosphate transaminase (isomerizing) activity"/>
    <property type="evidence" value="ECO:0007669"/>
    <property type="project" value="UniProtKB-UniRule"/>
</dbReference>
<dbReference type="GO" id="GO:0005975">
    <property type="term" value="P:carbohydrate metabolic process"/>
    <property type="evidence" value="ECO:0007669"/>
    <property type="project" value="UniProtKB-UniRule"/>
</dbReference>
<dbReference type="GO" id="GO:0006002">
    <property type="term" value="P:fructose 6-phosphate metabolic process"/>
    <property type="evidence" value="ECO:0007669"/>
    <property type="project" value="TreeGrafter"/>
</dbReference>
<dbReference type="GO" id="GO:0006487">
    <property type="term" value="P:protein N-linked glycosylation"/>
    <property type="evidence" value="ECO:0007669"/>
    <property type="project" value="TreeGrafter"/>
</dbReference>
<dbReference type="GO" id="GO:0006047">
    <property type="term" value="P:UDP-N-acetylglucosamine metabolic process"/>
    <property type="evidence" value="ECO:0007669"/>
    <property type="project" value="TreeGrafter"/>
</dbReference>
<dbReference type="CDD" id="cd00714">
    <property type="entry name" value="GFAT"/>
    <property type="match status" value="1"/>
</dbReference>
<dbReference type="CDD" id="cd05008">
    <property type="entry name" value="SIS_GlmS_GlmD_1"/>
    <property type="match status" value="1"/>
</dbReference>
<dbReference type="CDD" id="cd05009">
    <property type="entry name" value="SIS_GlmS_GlmD_2"/>
    <property type="match status" value="1"/>
</dbReference>
<dbReference type="FunFam" id="3.40.50.10490:FF:000001">
    <property type="entry name" value="Glutamine--fructose-6-phosphate aminotransferase [isomerizing]"/>
    <property type="match status" value="1"/>
</dbReference>
<dbReference type="FunFam" id="3.60.20.10:FF:000006">
    <property type="entry name" value="Glutamine--fructose-6-phosphate aminotransferase [isomerizing]"/>
    <property type="match status" value="1"/>
</dbReference>
<dbReference type="Gene3D" id="3.40.50.10490">
    <property type="entry name" value="Glucose-6-phosphate isomerase like protein, domain 1"/>
    <property type="match status" value="2"/>
</dbReference>
<dbReference type="Gene3D" id="3.60.20.10">
    <property type="entry name" value="Glutamine Phosphoribosylpyrophosphate, subunit 1, domain 1"/>
    <property type="match status" value="1"/>
</dbReference>
<dbReference type="HAMAP" id="MF_00164">
    <property type="entry name" value="GlmS"/>
    <property type="match status" value="1"/>
</dbReference>
<dbReference type="InterPro" id="IPR017932">
    <property type="entry name" value="GATase_2_dom"/>
</dbReference>
<dbReference type="InterPro" id="IPR005855">
    <property type="entry name" value="GFAT"/>
</dbReference>
<dbReference type="InterPro" id="IPR047084">
    <property type="entry name" value="GFAT_N"/>
</dbReference>
<dbReference type="InterPro" id="IPR035466">
    <property type="entry name" value="GlmS/AgaS_SIS"/>
</dbReference>
<dbReference type="InterPro" id="IPR035490">
    <property type="entry name" value="GlmS/FrlB_SIS"/>
</dbReference>
<dbReference type="InterPro" id="IPR029055">
    <property type="entry name" value="Ntn_hydrolases_N"/>
</dbReference>
<dbReference type="InterPro" id="IPR001347">
    <property type="entry name" value="SIS_dom"/>
</dbReference>
<dbReference type="InterPro" id="IPR046348">
    <property type="entry name" value="SIS_dom_sf"/>
</dbReference>
<dbReference type="NCBIfam" id="TIGR01135">
    <property type="entry name" value="glmS"/>
    <property type="match status" value="1"/>
</dbReference>
<dbReference type="NCBIfam" id="NF001484">
    <property type="entry name" value="PRK00331.1"/>
    <property type="match status" value="1"/>
</dbReference>
<dbReference type="PANTHER" id="PTHR10937">
    <property type="entry name" value="GLUCOSAMINE--FRUCTOSE-6-PHOSPHATE AMINOTRANSFERASE, ISOMERIZING"/>
    <property type="match status" value="1"/>
</dbReference>
<dbReference type="PANTHER" id="PTHR10937:SF0">
    <property type="entry name" value="GLUTAMINE--FRUCTOSE-6-PHOSPHATE TRANSAMINASE (ISOMERIZING)"/>
    <property type="match status" value="1"/>
</dbReference>
<dbReference type="Pfam" id="PF13522">
    <property type="entry name" value="GATase_6"/>
    <property type="match status" value="1"/>
</dbReference>
<dbReference type="Pfam" id="PF01380">
    <property type="entry name" value="SIS"/>
    <property type="match status" value="2"/>
</dbReference>
<dbReference type="SUPFAM" id="SSF56235">
    <property type="entry name" value="N-terminal nucleophile aminohydrolases (Ntn hydrolases)"/>
    <property type="match status" value="1"/>
</dbReference>
<dbReference type="SUPFAM" id="SSF53697">
    <property type="entry name" value="SIS domain"/>
    <property type="match status" value="1"/>
</dbReference>
<dbReference type="PROSITE" id="PS51278">
    <property type="entry name" value="GATASE_TYPE_2"/>
    <property type="match status" value="1"/>
</dbReference>
<dbReference type="PROSITE" id="PS51464">
    <property type="entry name" value="SIS"/>
    <property type="match status" value="2"/>
</dbReference>
<sequence>MCGIVGVVGNRNATDILMQGLEKLEYRGYDSAGIFVANGDKLSLVKSVGRIADLRSKIGIDVAGSTGIGHTRWATHGQATVENAHPHTSASSRFVLVHNGVIENYLQMKEEYLAGHEFKGQTDTEIAVHLIGKFVEEDGLSVLEAFKNALSIIEGSYAFALIDTEDADTIYVAKNKSPLLIGLGEGYNMVCSDAMAMIRETSQFMEIHDKELVILTKDSVTVLDYDGNQLERDSYTAELDLSDIGKGTYPFYMLKEIDEQPTVMRKLISTYSDESGKMAIDPAIVKTIQEADRIYILAAGTSYNAGFASKAMIEQLTDTPVELGVASEWGYNMPLLSQKPMFILLSQSGETADSRQVLVKANQMGIPSLTVTNVPGSTLSREATYTMLLHAGPEIAVASTKAYTAQVAALAFLSKAVGEANGKKEALEFDLVHELSLVAQSIEATLSEKDLIASKVEKLLATTRNAFYIGRGNDYYVAMEASLKLKEISYIQCEGFAAGELKHGTISLIEDGTPVIGLISSSELVAAHTRGNIQEVAARGASVLTVVEEGLDREGDDIVVNKVHPYLATIGMVIPTQLIAYYASLQRGLDVDKPRNLAKAVTVE</sequence>
<evidence type="ECO:0000255" key="1">
    <source>
        <dbReference type="HAMAP-Rule" id="MF_00164"/>
    </source>
</evidence>
<keyword id="KW-0032">Aminotransferase</keyword>
<keyword id="KW-0963">Cytoplasm</keyword>
<keyword id="KW-0315">Glutamine amidotransferase</keyword>
<keyword id="KW-0677">Repeat</keyword>
<keyword id="KW-0808">Transferase</keyword>
<gene>
    <name evidence="1" type="primary">glmS</name>
    <name type="ordered locus">M6_Spy0972</name>
</gene>
<proteinExistence type="inferred from homology"/>
<name>GLMS_STRP6</name>